<evidence type="ECO:0000255" key="1">
    <source>
        <dbReference type="HAMAP-Rule" id="MF_01323"/>
    </source>
</evidence>
<evidence type="ECO:0000305" key="2"/>
<proteinExistence type="inferred from homology"/>
<comment type="function">
    <text evidence="1">DNA-dependent RNA polymerase catalyzes the transcription of DNA into RNA using the four ribonucleoside triphosphates as substrates.</text>
</comment>
<comment type="catalytic activity">
    <reaction evidence="1">
        <text>RNA(n) + a ribonucleoside 5'-triphosphate = RNA(n+1) + diphosphate</text>
        <dbReference type="Rhea" id="RHEA:21248"/>
        <dbReference type="Rhea" id="RHEA-COMP:14527"/>
        <dbReference type="Rhea" id="RHEA-COMP:17342"/>
        <dbReference type="ChEBI" id="CHEBI:33019"/>
        <dbReference type="ChEBI" id="CHEBI:61557"/>
        <dbReference type="ChEBI" id="CHEBI:140395"/>
        <dbReference type="EC" id="2.7.7.6"/>
    </reaction>
</comment>
<comment type="cofactor">
    <cofactor evidence="1">
        <name>Mg(2+)</name>
        <dbReference type="ChEBI" id="CHEBI:18420"/>
    </cofactor>
    <text evidence="1">Binds 1 Mg(2+) ion per subunit.</text>
</comment>
<comment type="cofactor">
    <cofactor evidence="1">
        <name>Zn(2+)</name>
        <dbReference type="ChEBI" id="CHEBI:29105"/>
    </cofactor>
    <text evidence="1">Binds 1 Zn(2+) ion per subunit.</text>
</comment>
<comment type="subunit">
    <text evidence="1">In cyanobacteria the RNAP catalytic core is composed of 2 alpha, 1 beta, 1 beta', 1 gamma and 1 omega subunit. When a sigma factor is associated with the core the holoenzyme is formed, which can initiate transcription.</text>
</comment>
<comment type="similarity">
    <text evidence="1">Belongs to the RNA polymerase beta' chain family. RpoC1 subfamily.</text>
</comment>
<reference key="1">
    <citation type="submission" date="2006-05" db="EMBL/GenBank/DDBJ databases">
        <authorList>
            <consortium name="Genoscope"/>
        </authorList>
    </citation>
    <scope>NUCLEOTIDE SEQUENCE [LARGE SCALE GENOMIC DNA]</scope>
    <source>
        <strain>WH7803</strain>
    </source>
</reference>
<reference key="2">
    <citation type="submission" date="1995-01" db="EMBL/GenBank/DDBJ databases">
        <authorList>
            <person name="Palenik B.P."/>
        </authorList>
    </citation>
    <scope>NUCLEOTIDE SEQUENCE [GENOMIC DNA] OF 41-244</scope>
</reference>
<name>RPOC1_SYNPW</name>
<protein>
    <recommendedName>
        <fullName evidence="1">DNA-directed RNA polymerase subunit gamma</fullName>
        <shortName evidence="1">RNAP subunit gamma</shortName>
        <ecNumber evidence="1">2.7.7.6</ecNumber>
    </recommendedName>
    <alternativeName>
        <fullName evidence="1">RNA polymerase subunit gamma</fullName>
    </alternativeName>
    <alternativeName>
        <fullName evidence="1">Transcriptase subunit gamma</fullName>
    </alternativeName>
</protein>
<dbReference type="EC" id="2.7.7.6" evidence="1"/>
<dbReference type="EMBL" id="CT971583">
    <property type="protein sequence ID" value="CAK24487.1"/>
    <property type="molecule type" value="Genomic_DNA"/>
</dbReference>
<dbReference type="EMBL" id="L34061">
    <property type="protein sequence ID" value="AAA92725.1"/>
    <property type="molecule type" value="Genomic_DNA"/>
</dbReference>
<dbReference type="SMR" id="Q55346"/>
<dbReference type="STRING" id="32051.SynWH7803_2061"/>
<dbReference type="KEGG" id="syx:SynWH7803_2061"/>
<dbReference type="eggNOG" id="COG0086">
    <property type="taxonomic scope" value="Bacteria"/>
</dbReference>
<dbReference type="HOGENOM" id="CLU_030022_2_0_3"/>
<dbReference type="OrthoDB" id="9815296at2"/>
<dbReference type="Proteomes" id="UP000001566">
    <property type="component" value="Chromosome"/>
</dbReference>
<dbReference type="GO" id="GO:0000428">
    <property type="term" value="C:DNA-directed RNA polymerase complex"/>
    <property type="evidence" value="ECO:0007669"/>
    <property type="project" value="UniProtKB-KW"/>
</dbReference>
<dbReference type="GO" id="GO:0003677">
    <property type="term" value="F:DNA binding"/>
    <property type="evidence" value="ECO:0007669"/>
    <property type="project" value="UniProtKB-UniRule"/>
</dbReference>
<dbReference type="GO" id="GO:0003899">
    <property type="term" value="F:DNA-directed RNA polymerase activity"/>
    <property type="evidence" value="ECO:0007669"/>
    <property type="project" value="UniProtKB-UniRule"/>
</dbReference>
<dbReference type="GO" id="GO:0000287">
    <property type="term" value="F:magnesium ion binding"/>
    <property type="evidence" value="ECO:0007669"/>
    <property type="project" value="UniProtKB-UniRule"/>
</dbReference>
<dbReference type="GO" id="GO:0008270">
    <property type="term" value="F:zinc ion binding"/>
    <property type="evidence" value="ECO:0007669"/>
    <property type="project" value="UniProtKB-UniRule"/>
</dbReference>
<dbReference type="GO" id="GO:0006351">
    <property type="term" value="P:DNA-templated transcription"/>
    <property type="evidence" value="ECO:0007669"/>
    <property type="project" value="UniProtKB-UniRule"/>
</dbReference>
<dbReference type="Gene3D" id="1.10.40.90">
    <property type="match status" value="1"/>
</dbReference>
<dbReference type="Gene3D" id="2.40.40.20">
    <property type="match status" value="1"/>
</dbReference>
<dbReference type="Gene3D" id="4.10.860.120">
    <property type="entry name" value="RNA polymerase II, clamp domain"/>
    <property type="match status" value="1"/>
</dbReference>
<dbReference type="Gene3D" id="1.10.274.100">
    <property type="entry name" value="RNA polymerase Rpb1, domain 3"/>
    <property type="match status" value="1"/>
</dbReference>
<dbReference type="HAMAP" id="MF_01323">
    <property type="entry name" value="RNApol_bact_RpoC1"/>
    <property type="match status" value="1"/>
</dbReference>
<dbReference type="InterPro" id="IPR012755">
    <property type="entry name" value="DNA-dir_RpoC1_gamma"/>
</dbReference>
<dbReference type="InterPro" id="IPR045867">
    <property type="entry name" value="DNA-dir_RpoC_beta_prime"/>
</dbReference>
<dbReference type="InterPro" id="IPR000722">
    <property type="entry name" value="RNA_pol_asu"/>
</dbReference>
<dbReference type="InterPro" id="IPR006592">
    <property type="entry name" value="RNA_pol_N"/>
</dbReference>
<dbReference type="InterPro" id="IPR007080">
    <property type="entry name" value="RNA_pol_Rpb1_1"/>
</dbReference>
<dbReference type="InterPro" id="IPR007066">
    <property type="entry name" value="RNA_pol_Rpb1_3"/>
</dbReference>
<dbReference type="InterPro" id="IPR042102">
    <property type="entry name" value="RNA_pol_Rpb1_3_sf"/>
</dbReference>
<dbReference type="InterPro" id="IPR044893">
    <property type="entry name" value="RNA_pol_Rpb1_clamp_domain"/>
</dbReference>
<dbReference type="InterPro" id="IPR034678">
    <property type="entry name" value="RNApol_RpoC1"/>
</dbReference>
<dbReference type="NCBIfam" id="NF002729">
    <property type="entry name" value="PRK02625.1"/>
    <property type="match status" value="1"/>
</dbReference>
<dbReference type="NCBIfam" id="TIGR02387">
    <property type="entry name" value="rpoC1_cyan"/>
    <property type="match status" value="1"/>
</dbReference>
<dbReference type="PANTHER" id="PTHR19376">
    <property type="entry name" value="DNA-DIRECTED RNA POLYMERASE"/>
    <property type="match status" value="1"/>
</dbReference>
<dbReference type="PANTHER" id="PTHR19376:SF54">
    <property type="entry name" value="DNA-DIRECTED RNA POLYMERASE SUBUNIT BETA"/>
    <property type="match status" value="1"/>
</dbReference>
<dbReference type="Pfam" id="PF04997">
    <property type="entry name" value="RNA_pol_Rpb1_1"/>
    <property type="match status" value="1"/>
</dbReference>
<dbReference type="Pfam" id="PF00623">
    <property type="entry name" value="RNA_pol_Rpb1_2"/>
    <property type="match status" value="1"/>
</dbReference>
<dbReference type="Pfam" id="PF04983">
    <property type="entry name" value="RNA_pol_Rpb1_3"/>
    <property type="match status" value="1"/>
</dbReference>
<dbReference type="SMART" id="SM00663">
    <property type="entry name" value="RPOLA_N"/>
    <property type="match status" value="1"/>
</dbReference>
<dbReference type="SUPFAM" id="SSF64484">
    <property type="entry name" value="beta and beta-prime subunits of DNA dependent RNA-polymerase"/>
    <property type="match status" value="1"/>
</dbReference>
<sequence>MTNSNLRTENHFDYVKITLASPDRVMEWGQRTLPNGQVVGEVTKPETINYRTLKPEMDGLFCEKIFGPSKDWECHCGKYKRVRHRGIVCERCGVEVTESRVRRHRMGFIKLAAPVSHVWYLKGIPSYVAILLDMPLRDVEQIVYFNCYVVLDPGDHKDLKYKQLLTEDEWLEIEDEIYAEDSEIENEPVVGIGAEALKQLLEDLTLDEVAEQLREEIAGSKGQKRAKLIKRLRVIDNFIATNARPEWMVLDVIPVIPPDLRPMVQLDGGRFATSDLNDLYRRVINRNNRLARLQEILAPEIIVRNEKRMLQEAVDALIDNGRRGRTVVGANNRPLKSLSDIIEGKQGRFRQNLLGKRVDYSGRSVIVVGPKLKMHQCGLPKEMAIELFQPFVIHRLIRQNIVNNIKAAKKLIQRADDEVMQVLQEVIDGHPIMLNRAPTLHRLGIQAFEPKLVDGRAIQLHPLVCPAFNADFDGDQMAVHVPLAIEAQTEARMLMLASNNILSPATGEPIITPSQDMVLGAYYLTALQPDVQPVDFGDRSRTFSDLEDVIHAFEDKRLGLHDWVWVRFNGEVEDDDEREEPVSSETLSDGTRFEQWTYRRDRFDDDGALISRYILTTVGRVVMNHTIIDAVAAT</sequence>
<feature type="chain" id="PRO_0000067853" description="DNA-directed RNA polymerase subunit gamma">
    <location>
        <begin position="1"/>
        <end position="634"/>
    </location>
</feature>
<feature type="binding site" evidence="1">
    <location>
        <position position="74"/>
    </location>
    <ligand>
        <name>Zn(2+)</name>
        <dbReference type="ChEBI" id="CHEBI:29105"/>
    </ligand>
</feature>
<feature type="binding site" evidence="1">
    <location>
        <position position="76"/>
    </location>
    <ligand>
        <name>Zn(2+)</name>
        <dbReference type="ChEBI" id="CHEBI:29105"/>
    </ligand>
</feature>
<feature type="binding site" evidence="1">
    <location>
        <position position="89"/>
    </location>
    <ligand>
        <name>Zn(2+)</name>
        <dbReference type="ChEBI" id="CHEBI:29105"/>
    </ligand>
</feature>
<feature type="binding site" evidence="1">
    <location>
        <position position="92"/>
    </location>
    <ligand>
        <name>Zn(2+)</name>
        <dbReference type="ChEBI" id="CHEBI:29105"/>
    </ligand>
</feature>
<feature type="binding site" evidence="1">
    <location>
        <position position="471"/>
    </location>
    <ligand>
        <name>Mg(2+)</name>
        <dbReference type="ChEBI" id="CHEBI:18420"/>
    </ligand>
</feature>
<feature type="binding site" evidence="1">
    <location>
        <position position="473"/>
    </location>
    <ligand>
        <name>Mg(2+)</name>
        <dbReference type="ChEBI" id="CHEBI:18420"/>
    </ligand>
</feature>
<feature type="binding site" evidence="1">
    <location>
        <position position="475"/>
    </location>
    <ligand>
        <name>Mg(2+)</name>
        <dbReference type="ChEBI" id="CHEBI:18420"/>
    </ligand>
</feature>
<feature type="sequence conflict" description="In Ref. 2; AAA92725." evidence="2" ref="2">
    <original>LR</original>
    <variation>PA</variation>
    <location>
        <begin position="136"/>
        <end position="137"/>
    </location>
</feature>
<keyword id="KW-0240">DNA-directed RNA polymerase</keyword>
<keyword id="KW-0460">Magnesium</keyword>
<keyword id="KW-0479">Metal-binding</keyword>
<keyword id="KW-0548">Nucleotidyltransferase</keyword>
<keyword id="KW-1185">Reference proteome</keyword>
<keyword id="KW-0804">Transcription</keyword>
<keyword id="KW-0808">Transferase</keyword>
<keyword id="KW-0862">Zinc</keyword>
<gene>
    <name evidence="1" type="primary">rpoC1</name>
    <name type="ordered locus">SynWH7803_2061</name>
</gene>
<accession>Q55346</accession>
<accession>A5GNH2</accession>
<organism>
    <name type="scientific">Synechococcus sp. (strain WH7803)</name>
    <dbReference type="NCBI Taxonomy" id="32051"/>
    <lineage>
        <taxon>Bacteria</taxon>
        <taxon>Bacillati</taxon>
        <taxon>Cyanobacteriota</taxon>
        <taxon>Cyanophyceae</taxon>
        <taxon>Synechococcales</taxon>
        <taxon>Synechococcaceae</taxon>
        <taxon>Synechococcus</taxon>
    </lineage>
</organism>